<keyword id="KW-0012">Acyltransferase</keyword>
<keyword id="KW-0808">Transferase</keyword>
<comment type="function">
    <text evidence="6">Catalyzes the acetylation of beta-lysine to N6-acetyl-beta-lysine, a compatible solute produced by methanogenic archaea that helps cells to cope with salt stress.</text>
</comment>
<comment type="catalytic activity">
    <reaction evidence="3">
        <text>(3S)-3,6-diaminohexanoate + acetyl-CoA = (3S)-6-acetamido-3-aminohexanoate + CoA + H(+)</text>
        <dbReference type="Rhea" id="RHEA:33019"/>
        <dbReference type="ChEBI" id="CHEBI:15378"/>
        <dbReference type="ChEBI" id="CHEBI:57287"/>
        <dbReference type="ChEBI" id="CHEBI:57288"/>
        <dbReference type="ChEBI" id="CHEBI:57434"/>
        <dbReference type="ChEBI" id="CHEBI:137165"/>
        <dbReference type="EC" id="2.3.1.264"/>
    </reaction>
</comment>
<comment type="induction">
    <text evidence="3">Transcription is induced at high salt concentrations. Forms part of an operon with ablA.</text>
</comment>
<comment type="similarity">
    <text evidence="5">Belongs to the acetyltransferase family.</text>
</comment>
<organism>
    <name type="scientific">Methanosarcina mazei (strain ATCC BAA-159 / DSM 3647 / Goe1 / Go1 / JCM 11833 / OCM 88)</name>
    <name type="common">Methanosarcina frisia</name>
    <dbReference type="NCBI Taxonomy" id="192952"/>
    <lineage>
        <taxon>Archaea</taxon>
        <taxon>Methanobacteriati</taxon>
        <taxon>Methanobacteriota</taxon>
        <taxon>Stenosarchaea group</taxon>
        <taxon>Methanomicrobia</taxon>
        <taxon>Methanosarcinales</taxon>
        <taxon>Methanosarcinaceae</taxon>
        <taxon>Methanosarcina</taxon>
    </lineage>
</organism>
<feature type="chain" id="PRO_0000423059" description="Beta-lysine N(6)-acetyltransferase">
    <location>
        <begin position="1"/>
        <end position="271"/>
    </location>
</feature>
<feature type="domain" description="N-acetyltransferase" evidence="1">
    <location>
        <begin position="121"/>
        <end position="269"/>
    </location>
</feature>
<feature type="region of interest" description="Disordered" evidence="2">
    <location>
        <begin position="86"/>
        <end position="122"/>
    </location>
</feature>
<feature type="compositionally biased region" description="Basic residues" evidence="2">
    <location>
        <begin position="95"/>
        <end position="114"/>
    </location>
</feature>
<accession>Q8PYC8</accession>
<name>ABLB_METMA</name>
<protein>
    <recommendedName>
        <fullName evidence="5">Beta-lysine N(6)-acetyltransferase</fullName>
        <ecNumber evidence="3">2.3.1.264</ecNumber>
    </recommendedName>
</protein>
<reference key="1">
    <citation type="journal article" date="2002" name="J. Mol. Microbiol. Biotechnol.">
        <title>The genome of Methanosarcina mazei: evidence for lateral gene transfer between Bacteria and Archaea.</title>
        <authorList>
            <person name="Deppenmeier U."/>
            <person name="Johann A."/>
            <person name="Hartsch T."/>
            <person name="Merkl R."/>
            <person name="Schmitz R.A."/>
            <person name="Martinez-Arias R."/>
            <person name="Henne A."/>
            <person name="Wiezer A."/>
            <person name="Baeumer S."/>
            <person name="Jacobi C."/>
            <person name="Brueggemann H."/>
            <person name="Lienard T."/>
            <person name="Christmann A."/>
            <person name="Boemecke M."/>
            <person name="Steckel S."/>
            <person name="Bhattacharyya A."/>
            <person name="Lykidis A."/>
            <person name="Overbeek R."/>
            <person name="Klenk H.-P."/>
            <person name="Gunsalus R.P."/>
            <person name="Fritz H.-J."/>
            <person name="Gottschalk G."/>
        </authorList>
    </citation>
    <scope>NUCLEOTIDE SEQUENCE [LARGE SCALE GENOMIC DNA]</scope>
    <source>
        <strain>ATCC BAA-159 / DSM 3647 / Goe1 / Go1 / JCM 11833 / OCM 88</strain>
    </source>
</reference>
<reference key="2">
    <citation type="journal article" date="2003" name="Appl. Environ. Microbiol.">
        <title>Lysine-2,3-aminomutase and beta-lysine acetyltransferase genes of methanogenic archaea are salt induced and are essential for the biosynthesis of Nepsilon-acetyl-beta-lysine and growth at high salinity.</title>
        <authorList>
            <person name="Pfluger K."/>
            <person name="Baumann S."/>
            <person name="Gottschalk G."/>
            <person name="Lin W."/>
            <person name="Santos H."/>
            <person name="Muller V."/>
        </authorList>
    </citation>
    <scope>IDENTIFICATION</scope>
    <scope>FUNCTION</scope>
    <scope>CATALYTIC ACTIVITY</scope>
    <scope>GENE NAME</scope>
    <scope>INDUCTION</scope>
    <scope>OPERON STRUCTURE</scope>
    <source>
        <strain>ATCC BAA-159 / DSM 3647 / Goe1 / Go1 / JCM 11833 / OCM 88</strain>
    </source>
</reference>
<dbReference type="EC" id="2.3.1.264" evidence="3"/>
<dbReference type="EMBL" id="AE008384">
    <property type="protein sequence ID" value="AAM30631.1"/>
    <property type="molecule type" value="Genomic_DNA"/>
</dbReference>
<dbReference type="SMR" id="Q8PYC8"/>
<dbReference type="KEGG" id="mma:MM_0935"/>
<dbReference type="PATRIC" id="fig|192952.21.peg.1102"/>
<dbReference type="eggNOG" id="arCOG04916">
    <property type="taxonomic scope" value="Archaea"/>
</dbReference>
<dbReference type="HOGENOM" id="CLU_081246_0_0_2"/>
<dbReference type="BRENDA" id="2.3.1.264">
    <property type="organism ID" value="3270"/>
</dbReference>
<dbReference type="Proteomes" id="UP000000595">
    <property type="component" value="Chromosome"/>
</dbReference>
<dbReference type="GO" id="GO:0008080">
    <property type="term" value="F:N-acetyltransferase activity"/>
    <property type="evidence" value="ECO:0007669"/>
    <property type="project" value="InterPro"/>
</dbReference>
<dbReference type="CDD" id="cd04301">
    <property type="entry name" value="NAT_SF"/>
    <property type="match status" value="1"/>
</dbReference>
<dbReference type="Gene3D" id="3.40.630.30">
    <property type="match status" value="1"/>
</dbReference>
<dbReference type="InterPro" id="IPR016181">
    <property type="entry name" value="Acyl_CoA_acyltransferase"/>
</dbReference>
<dbReference type="InterPro" id="IPR022525">
    <property type="entry name" value="GNAT_AblB"/>
</dbReference>
<dbReference type="InterPro" id="IPR000182">
    <property type="entry name" value="GNAT_dom"/>
</dbReference>
<dbReference type="NCBIfam" id="TIGR03827">
    <property type="entry name" value="GNAT_ablB"/>
    <property type="match status" value="1"/>
</dbReference>
<dbReference type="Pfam" id="PF00583">
    <property type="entry name" value="Acetyltransf_1"/>
    <property type="match status" value="1"/>
</dbReference>
<dbReference type="SUPFAM" id="SSF55729">
    <property type="entry name" value="Acyl-CoA N-acyltransferases (Nat)"/>
    <property type="match status" value="1"/>
</dbReference>
<dbReference type="PROSITE" id="PS51186">
    <property type="entry name" value="GNAT"/>
    <property type="match status" value="1"/>
</dbReference>
<evidence type="ECO:0000255" key="1">
    <source>
        <dbReference type="PROSITE-ProRule" id="PRU00532"/>
    </source>
</evidence>
<evidence type="ECO:0000256" key="2">
    <source>
        <dbReference type="SAM" id="MobiDB-lite"/>
    </source>
</evidence>
<evidence type="ECO:0000269" key="3">
    <source>
    </source>
</evidence>
<evidence type="ECO:0000303" key="4">
    <source>
    </source>
</evidence>
<evidence type="ECO:0000305" key="5"/>
<evidence type="ECO:0000305" key="6">
    <source>
    </source>
</evidence>
<proteinExistence type="evidence at protein level"/>
<gene>
    <name evidence="4" type="primary">ablB</name>
    <name type="ordered locus">MM_0935</name>
</gene>
<sequence>MDFIGRFEEIAGALKALAGTEKMGKIIVYTPPEKKDEPETCGYMEEGIIRRYYAGKDCHIYSNYPESSREISFHKEKEDRIIKNCLRKDRGTGKNQKKKKISRKKDNWKKRKEKSRLPEGYTLRPAVQADASAMASLYSQGFELYPTPLHMENYILETMHSNVLYFLVEKYGKIVSLASAEMDPKNRNAEITDCLTIPSERGKGHMKELIRALEKELSERSFLISYTLCRASAPGINAAFSSLGYAFTGRLVNNCRIGNGFEDMNIWCRML</sequence>